<keyword id="KW-1185">Reference proteome</keyword>
<accession>P0C0X2</accession>
<accession>P46812</accession>
<feature type="chain" id="PRO_0000168214" description="Inactive dihydropteroate synthase 2">
    <location>
        <begin position="1"/>
        <end position="291"/>
    </location>
</feature>
<feature type="domain" description="Pterin-binding" evidence="2">
    <location>
        <begin position="15"/>
        <end position="272"/>
    </location>
</feature>
<feature type="site" description="Characteristic for family members without dihydropteroate synthase activity" evidence="1">
    <location>
        <position position="193"/>
    </location>
</feature>
<proteinExistence type="inferred from homology"/>
<protein>
    <recommendedName>
        <fullName>Inactive dihydropteroate synthase 2</fullName>
        <shortName>DHPS 2</shortName>
    </recommendedName>
    <alternativeName>
        <fullName>Dihydropteroate pyrophosphorylase 2</fullName>
    </alternativeName>
</protein>
<comment type="function">
    <text evidence="1">Has very low affinity for the DHPS substrate 6-hydroxymethyl-7,8-dihydropterin-pyrophosphate, but can bind the inhibitor dapsone. Seems to lack dihydropteroate synthase activity, and does probably not function in folate metabolism (By similarity).</text>
</comment>
<comment type="subunit">
    <text evidence="1">Homodimer.</text>
</comment>
<comment type="similarity">
    <text evidence="3">Belongs to the DHPS family.</text>
</comment>
<sequence>MQSMLCGRPVAADRQLIMAIVNRTPDSFYDRGATFSDEAARAAAHRAVAEGADVIDVGGVKAGPGQGVDVDTEIARLVPFIEWLRSAYTDLLISVDTWRAEVARLACTAGADLINDSWGGADPAMHEVAAELGAGLVCSHTGGALPRTRPFRVSYGTTTRGVVDDVIRQVTAAAERAVAAGVTRDSVLVDPTHDFGKNTFHGLLLLRHVDELVKTGWPVLMSLSNKDFVGETLGVGLTERLEGTLAATALAAAAGVRMFRVHEVVATRRVLEMVASIQGTRPPTRTVRGLA</sequence>
<reference key="1">
    <citation type="submission" date="1994-09" db="EMBL/GenBank/DDBJ databases">
        <authorList>
            <person name="Smith D.R."/>
            <person name="Robison K."/>
        </authorList>
    </citation>
    <scope>NUCLEOTIDE SEQUENCE [GENOMIC DNA]</scope>
</reference>
<reference key="2">
    <citation type="journal article" date="2001" name="Nature">
        <title>Massive gene decay in the leprosy bacillus.</title>
        <authorList>
            <person name="Cole S.T."/>
            <person name="Eiglmeier K."/>
            <person name="Parkhill J."/>
            <person name="James K.D."/>
            <person name="Thomson N.R."/>
            <person name="Wheeler P.R."/>
            <person name="Honore N."/>
            <person name="Garnier T."/>
            <person name="Churcher C.M."/>
            <person name="Harris D.E."/>
            <person name="Mungall K.L."/>
            <person name="Basham D."/>
            <person name="Brown D."/>
            <person name="Chillingworth T."/>
            <person name="Connor R."/>
            <person name="Davies R.M."/>
            <person name="Devlin K."/>
            <person name="Duthoy S."/>
            <person name="Feltwell T."/>
            <person name="Fraser A."/>
            <person name="Hamlin N."/>
            <person name="Holroyd S."/>
            <person name="Hornsby T."/>
            <person name="Jagels K."/>
            <person name="Lacroix C."/>
            <person name="Maclean J."/>
            <person name="Moule S."/>
            <person name="Murphy L.D."/>
            <person name="Oliver K."/>
            <person name="Quail M.A."/>
            <person name="Rajandream M.A."/>
            <person name="Rutherford K.M."/>
            <person name="Rutter S."/>
            <person name="Seeger K."/>
            <person name="Simon S."/>
            <person name="Simmonds M."/>
            <person name="Skelton J."/>
            <person name="Squares R."/>
            <person name="Squares S."/>
            <person name="Stevens K."/>
            <person name="Taylor K."/>
            <person name="Whitehead S."/>
            <person name="Woodward J.R."/>
            <person name="Barrell B.G."/>
        </authorList>
    </citation>
    <scope>NUCLEOTIDE SEQUENCE [LARGE SCALE GENOMIC DNA]</scope>
    <source>
        <strain>TN</strain>
    </source>
</reference>
<organism>
    <name type="scientific">Mycobacterium leprae (strain TN)</name>
    <dbReference type="NCBI Taxonomy" id="272631"/>
    <lineage>
        <taxon>Bacteria</taxon>
        <taxon>Bacillati</taxon>
        <taxon>Actinomycetota</taxon>
        <taxon>Actinomycetes</taxon>
        <taxon>Mycobacteriales</taxon>
        <taxon>Mycobacteriaceae</taxon>
        <taxon>Mycobacterium</taxon>
    </lineage>
</organism>
<gene>
    <name type="primary">folP2</name>
    <name type="ordered locus">ML1063</name>
</gene>
<dbReference type="EMBL" id="U15180">
    <property type="protein sequence ID" value="AAA62918.1"/>
    <property type="molecule type" value="Genomic_DNA"/>
</dbReference>
<dbReference type="EMBL" id="AL583920">
    <property type="protein sequence ID" value="CAC31444.1"/>
    <property type="molecule type" value="Genomic_DNA"/>
</dbReference>
<dbReference type="PIR" id="T45179">
    <property type="entry name" value="T45179"/>
</dbReference>
<dbReference type="RefSeq" id="NP_301781.1">
    <property type="nucleotide sequence ID" value="NC_002677.1"/>
</dbReference>
<dbReference type="SMR" id="P0C0X2"/>
<dbReference type="STRING" id="272631.gene:17574889"/>
<dbReference type="DrugBank" id="DB00250">
    <property type="generic name" value="Dapsone"/>
</dbReference>
<dbReference type="KEGG" id="mle:ML1063"/>
<dbReference type="PATRIC" id="fig|272631.5.peg.1909"/>
<dbReference type="Leproma" id="ML1063"/>
<dbReference type="eggNOG" id="COG0294">
    <property type="taxonomic scope" value="Bacteria"/>
</dbReference>
<dbReference type="HOGENOM" id="CLU_008023_0_0_11"/>
<dbReference type="OrthoDB" id="9811744at2"/>
<dbReference type="BRENDA" id="2.5.1.15">
    <property type="organism ID" value="3504"/>
</dbReference>
<dbReference type="Proteomes" id="UP000000806">
    <property type="component" value="Chromosome"/>
</dbReference>
<dbReference type="GO" id="GO:0005829">
    <property type="term" value="C:cytosol"/>
    <property type="evidence" value="ECO:0007669"/>
    <property type="project" value="TreeGrafter"/>
</dbReference>
<dbReference type="GO" id="GO:0004156">
    <property type="term" value="F:dihydropteroate synthase activity"/>
    <property type="evidence" value="ECO:0007669"/>
    <property type="project" value="InterPro"/>
</dbReference>
<dbReference type="GO" id="GO:0009396">
    <property type="term" value="P:folic acid-containing compound biosynthetic process"/>
    <property type="evidence" value="ECO:0007669"/>
    <property type="project" value="InterPro"/>
</dbReference>
<dbReference type="CDD" id="cd00739">
    <property type="entry name" value="DHPS"/>
    <property type="match status" value="1"/>
</dbReference>
<dbReference type="FunFam" id="3.20.20.20:FF:000008">
    <property type="entry name" value="Dihydropteroate synthase"/>
    <property type="match status" value="1"/>
</dbReference>
<dbReference type="Gene3D" id="3.20.20.20">
    <property type="entry name" value="Dihydropteroate synthase-like"/>
    <property type="match status" value="1"/>
</dbReference>
<dbReference type="InterPro" id="IPR045031">
    <property type="entry name" value="DHP_synth-like"/>
</dbReference>
<dbReference type="InterPro" id="IPR006390">
    <property type="entry name" value="DHP_synth_dom"/>
</dbReference>
<dbReference type="InterPro" id="IPR011005">
    <property type="entry name" value="Dihydropteroate_synth-like_sf"/>
</dbReference>
<dbReference type="InterPro" id="IPR000489">
    <property type="entry name" value="Pterin-binding_dom"/>
</dbReference>
<dbReference type="NCBIfam" id="TIGR01496">
    <property type="entry name" value="DHPS"/>
    <property type="match status" value="1"/>
</dbReference>
<dbReference type="PANTHER" id="PTHR20941">
    <property type="entry name" value="FOLATE SYNTHESIS PROTEINS"/>
    <property type="match status" value="1"/>
</dbReference>
<dbReference type="PANTHER" id="PTHR20941:SF8">
    <property type="entry name" value="INACTIVE DIHYDROPTEROATE SYNTHASE 2"/>
    <property type="match status" value="1"/>
</dbReference>
<dbReference type="Pfam" id="PF00809">
    <property type="entry name" value="Pterin_bind"/>
    <property type="match status" value="1"/>
</dbReference>
<dbReference type="SUPFAM" id="SSF51717">
    <property type="entry name" value="Dihydropteroate synthetase-like"/>
    <property type="match status" value="1"/>
</dbReference>
<dbReference type="PROSITE" id="PS00792">
    <property type="entry name" value="DHPS_1"/>
    <property type="match status" value="1"/>
</dbReference>
<dbReference type="PROSITE" id="PS00793">
    <property type="entry name" value="DHPS_2"/>
    <property type="match status" value="1"/>
</dbReference>
<dbReference type="PROSITE" id="PS50972">
    <property type="entry name" value="PTERIN_BINDING"/>
    <property type="match status" value="1"/>
</dbReference>
<name>DHPS2_MYCLE</name>
<evidence type="ECO:0000250" key="1"/>
<evidence type="ECO:0000255" key="2">
    <source>
        <dbReference type="PROSITE-ProRule" id="PRU00334"/>
    </source>
</evidence>
<evidence type="ECO:0000305" key="3"/>